<proteinExistence type="inferred from homology"/>
<reference key="1">
    <citation type="submission" date="2018-02" db="EMBL/GenBank/DDBJ databases">
        <authorList>
            <person name="Johnson J."/>
            <person name="Muren E."/>
            <person name="Swofford R."/>
            <person name="Turner-Maier J."/>
            <person name="Marinescu V.D."/>
            <person name="Genereux D.P."/>
            <person name="Alfoldi J."/>
            <person name="Birren B."/>
            <person name="Karlsson E.K."/>
            <person name="Lindblad-Toh K."/>
        </authorList>
    </citation>
    <scope>NUCLEOTIDE SEQUENCE [LARGE SCALE GENOMIC DNA]</scope>
</reference>
<reference key="2">
    <citation type="unpublished observations" date="2021-01">
        <authorList>
            <person name="Puppione D.L."/>
        </authorList>
    </citation>
    <scope>IDENTIFICATION</scope>
</reference>
<organism>
    <name type="scientific">Rousettus aegyptiacus</name>
    <name type="common">Egyptian fruit bat</name>
    <name type="synonym">Pteropus aegyptiacus</name>
    <dbReference type="NCBI Taxonomy" id="9407"/>
    <lineage>
        <taxon>Eukaryota</taxon>
        <taxon>Metazoa</taxon>
        <taxon>Chordata</taxon>
        <taxon>Craniata</taxon>
        <taxon>Vertebrata</taxon>
        <taxon>Euteleostomi</taxon>
        <taxon>Mammalia</taxon>
        <taxon>Eutheria</taxon>
        <taxon>Laurasiatheria</taxon>
        <taxon>Chiroptera</taxon>
        <taxon>Yinpterochiroptera</taxon>
        <taxon>Pteropodoidea</taxon>
        <taxon>Pteropodidae</taxon>
        <taxon>Rousettinae</taxon>
        <taxon>Rousettus</taxon>
    </lineage>
</organism>
<feature type="signal peptide" evidence="4">
    <location>
        <begin position="1"/>
        <end position="26"/>
    </location>
</feature>
<feature type="chain" id="PRO_0000452417" description="Apolipoprotein C-I">
    <location>
        <begin position="27"/>
        <end position="83"/>
    </location>
</feature>
<feature type="chain" id="PRO_0000452418" description="Truncated apolipoprotein C-I" evidence="3">
    <location>
        <begin position="29"/>
        <end position="83"/>
    </location>
</feature>
<gene>
    <name type="primary">APOC1</name>
</gene>
<dbReference type="EMBL" id="PVIL01005404">
    <property type="status" value="NOT_ANNOTATED_CDS"/>
    <property type="molecule type" value="Genomic_DNA"/>
</dbReference>
<dbReference type="SMR" id="P0DTG6"/>
<dbReference type="GO" id="GO:0034364">
    <property type="term" value="C:high-density lipoprotein particle"/>
    <property type="evidence" value="ECO:0007669"/>
    <property type="project" value="TreeGrafter"/>
</dbReference>
<dbReference type="GO" id="GO:0034361">
    <property type="term" value="C:very-low-density lipoprotein particle"/>
    <property type="evidence" value="ECO:0007669"/>
    <property type="project" value="UniProtKB-KW"/>
</dbReference>
<dbReference type="GO" id="GO:0005504">
    <property type="term" value="F:fatty acid binding"/>
    <property type="evidence" value="ECO:0007669"/>
    <property type="project" value="TreeGrafter"/>
</dbReference>
<dbReference type="GO" id="GO:0004859">
    <property type="term" value="F:phospholipase inhibitor activity"/>
    <property type="evidence" value="ECO:0007669"/>
    <property type="project" value="TreeGrafter"/>
</dbReference>
<dbReference type="GO" id="GO:0006869">
    <property type="term" value="P:lipid transport"/>
    <property type="evidence" value="ECO:0007669"/>
    <property type="project" value="UniProtKB-KW"/>
</dbReference>
<dbReference type="GO" id="GO:0042157">
    <property type="term" value="P:lipoprotein metabolic process"/>
    <property type="evidence" value="ECO:0007669"/>
    <property type="project" value="InterPro"/>
</dbReference>
<dbReference type="GO" id="GO:0032375">
    <property type="term" value="P:negative regulation of cholesterol transport"/>
    <property type="evidence" value="ECO:0007669"/>
    <property type="project" value="TreeGrafter"/>
</dbReference>
<dbReference type="GO" id="GO:0050995">
    <property type="term" value="P:negative regulation of lipid catabolic process"/>
    <property type="evidence" value="ECO:0007669"/>
    <property type="project" value="TreeGrafter"/>
</dbReference>
<dbReference type="GO" id="GO:0010916">
    <property type="term" value="P:negative regulation of very-low-density lipoprotein particle clearance"/>
    <property type="evidence" value="ECO:0007669"/>
    <property type="project" value="TreeGrafter"/>
</dbReference>
<dbReference type="GO" id="GO:0006641">
    <property type="term" value="P:triglyceride metabolic process"/>
    <property type="evidence" value="ECO:0007669"/>
    <property type="project" value="TreeGrafter"/>
</dbReference>
<dbReference type="GO" id="GO:0034447">
    <property type="term" value="P:very-low-density lipoprotein particle clearance"/>
    <property type="evidence" value="ECO:0007669"/>
    <property type="project" value="TreeGrafter"/>
</dbReference>
<dbReference type="Gene3D" id="4.10.260.30">
    <property type="entry name" value="Apolipoprotein C-I"/>
    <property type="match status" value="1"/>
</dbReference>
<dbReference type="InterPro" id="IPR043081">
    <property type="entry name" value="ApoC-1_sf"/>
</dbReference>
<dbReference type="InterPro" id="IPR006781">
    <property type="entry name" value="ApoC-I"/>
</dbReference>
<dbReference type="PANTHER" id="PTHR16565">
    <property type="entry name" value="APOLIPOPROTEIN C-I"/>
    <property type="match status" value="1"/>
</dbReference>
<dbReference type="PANTHER" id="PTHR16565:SF2">
    <property type="entry name" value="APOLIPOPROTEIN C-I"/>
    <property type="match status" value="1"/>
</dbReference>
<dbReference type="Pfam" id="PF04691">
    <property type="entry name" value="ApoC-I"/>
    <property type="match status" value="1"/>
</dbReference>
<protein>
    <recommendedName>
        <fullName>Apolipoprotein C-I</fullName>
        <shortName>Apo-CI</shortName>
        <shortName>ApoC-I</shortName>
    </recommendedName>
    <alternativeName>
        <fullName>Apolipoprotein C1</fullName>
    </alternativeName>
    <component>
        <recommendedName>
            <fullName>Truncated apolipoprotein C-I</fullName>
        </recommendedName>
    </component>
</protein>
<comment type="function">
    <text evidence="1 2">Inhibitor of lipoprotein binding to the low density lipoprotein (LDL) receptor, LDL receptor-related protein, and very low density lipoprotein (VLDL) receptor. Associates with high density lipoproteins (HDL) and the triacylglycerol-rich lipoproteins in the plasma and makes up about 10% of the protein of the VLDL and 2% of that of HDL. Appears to interfere directly with fatty acid uptake and is also the major plasma inhibitor of cholesteryl ester transfer protein (CETP). Binds free fatty acids and reduces their intracellular esterification. Modulates the interaction of APOE with beta-migrating VLDL and inhibits binding of beta-VLDL to the LDL receptor-related protein.</text>
</comment>
<comment type="subcellular location">
    <subcellularLocation>
        <location evidence="1">Secreted</location>
    </subcellularLocation>
</comment>
<comment type="similarity">
    <text evidence="5">Belongs to the apolipoprotein C1 family.</text>
</comment>
<sequence length="83" mass="9315">MRLILSLPVLAVVLAMVLEGPAPAQAAPDVSSTLESISEKLTEFGRTVADKFRTAVDQIKKSDFPEKTRNWFSEMFNKLKEKF</sequence>
<evidence type="ECO:0000250" key="1">
    <source>
        <dbReference type="UniProtKB" id="P02654"/>
    </source>
</evidence>
<evidence type="ECO:0000250" key="2">
    <source>
        <dbReference type="UniProtKB" id="P33047"/>
    </source>
</evidence>
<evidence type="ECO:0000250" key="3">
    <source>
        <dbReference type="UniProtKB" id="P86336"/>
    </source>
</evidence>
<evidence type="ECO:0000255" key="4"/>
<evidence type="ECO:0000305" key="5"/>
<name>APOC1_ROUAE</name>
<accession>P0DTG6</accession>
<keyword id="KW-0445">Lipid transport</keyword>
<keyword id="KW-0964">Secreted</keyword>
<keyword id="KW-0732">Signal</keyword>
<keyword id="KW-0813">Transport</keyword>
<keyword id="KW-0850">VLDL</keyword>